<organism>
    <name type="scientific">Bacillus thuringiensis subsp. konkukian (strain 97-27)</name>
    <dbReference type="NCBI Taxonomy" id="281309"/>
    <lineage>
        <taxon>Bacteria</taxon>
        <taxon>Bacillati</taxon>
        <taxon>Bacillota</taxon>
        <taxon>Bacilli</taxon>
        <taxon>Bacillales</taxon>
        <taxon>Bacillaceae</taxon>
        <taxon>Bacillus</taxon>
        <taxon>Bacillus cereus group</taxon>
    </lineage>
</organism>
<name>MURD_BACHK</name>
<reference key="1">
    <citation type="journal article" date="2006" name="J. Bacteriol.">
        <title>Pathogenomic sequence analysis of Bacillus cereus and Bacillus thuringiensis isolates closely related to Bacillus anthracis.</title>
        <authorList>
            <person name="Han C.S."/>
            <person name="Xie G."/>
            <person name="Challacombe J.F."/>
            <person name="Altherr M.R."/>
            <person name="Bhotika S.S."/>
            <person name="Bruce D."/>
            <person name="Campbell C.S."/>
            <person name="Campbell M.L."/>
            <person name="Chen J."/>
            <person name="Chertkov O."/>
            <person name="Cleland C."/>
            <person name="Dimitrijevic M."/>
            <person name="Doggett N.A."/>
            <person name="Fawcett J.J."/>
            <person name="Glavina T."/>
            <person name="Goodwin L.A."/>
            <person name="Hill K.K."/>
            <person name="Hitchcock P."/>
            <person name="Jackson P.J."/>
            <person name="Keim P."/>
            <person name="Kewalramani A.R."/>
            <person name="Longmire J."/>
            <person name="Lucas S."/>
            <person name="Malfatti S."/>
            <person name="McMurry K."/>
            <person name="Meincke L.J."/>
            <person name="Misra M."/>
            <person name="Moseman B.L."/>
            <person name="Mundt M."/>
            <person name="Munk A.C."/>
            <person name="Okinaka R.T."/>
            <person name="Parson-Quintana B."/>
            <person name="Reilly L.P."/>
            <person name="Richardson P."/>
            <person name="Robinson D.L."/>
            <person name="Rubin E."/>
            <person name="Saunders E."/>
            <person name="Tapia R."/>
            <person name="Tesmer J.G."/>
            <person name="Thayer N."/>
            <person name="Thompson L.S."/>
            <person name="Tice H."/>
            <person name="Ticknor L.O."/>
            <person name="Wills P.L."/>
            <person name="Brettin T.S."/>
            <person name="Gilna P."/>
        </authorList>
    </citation>
    <scope>NUCLEOTIDE SEQUENCE [LARGE SCALE GENOMIC DNA]</scope>
    <source>
        <strain>97-27</strain>
    </source>
</reference>
<dbReference type="EC" id="6.3.2.9" evidence="1"/>
<dbReference type="EMBL" id="AE017355">
    <property type="protein sequence ID" value="AAT61588.1"/>
    <property type="molecule type" value="Genomic_DNA"/>
</dbReference>
<dbReference type="RefSeq" id="WP_000860120.1">
    <property type="nucleotide sequence ID" value="NC_005957.1"/>
</dbReference>
<dbReference type="RefSeq" id="YP_037974.1">
    <property type="nucleotide sequence ID" value="NC_005957.1"/>
</dbReference>
<dbReference type="SMR" id="Q6HEQ2"/>
<dbReference type="KEGG" id="btk:BT9727_3654"/>
<dbReference type="PATRIC" id="fig|281309.8.peg.3893"/>
<dbReference type="HOGENOM" id="CLU_032540_0_1_9"/>
<dbReference type="UniPathway" id="UPA00219"/>
<dbReference type="Proteomes" id="UP000001301">
    <property type="component" value="Chromosome"/>
</dbReference>
<dbReference type="GO" id="GO:0005737">
    <property type="term" value="C:cytoplasm"/>
    <property type="evidence" value="ECO:0007669"/>
    <property type="project" value="UniProtKB-SubCell"/>
</dbReference>
<dbReference type="GO" id="GO:0005524">
    <property type="term" value="F:ATP binding"/>
    <property type="evidence" value="ECO:0007669"/>
    <property type="project" value="UniProtKB-UniRule"/>
</dbReference>
<dbReference type="GO" id="GO:0008764">
    <property type="term" value="F:UDP-N-acetylmuramoylalanine-D-glutamate ligase activity"/>
    <property type="evidence" value="ECO:0007669"/>
    <property type="project" value="UniProtKB-UniRule"/>
</dbReference>
<dbReference type="GO" id="GO:0051301">
    <property type="term" value="P:cell division"/>
    <property type="evidence" value="ECO:0007669"/>
    <property type="project" value="UniProtKB-KW"/>
</dbReference>
<dbReference type="GO" id="GO:0071555">
    <property type="term" value="P:cell wall organization"/>
    <property type="evidence" value="ECO:0007669"/>
    <property type="project" value="UniProtKB-KW"/>
</dbReference>
<dbReference type="GO" id="GO:0009252">
    <property type="term" value="P:peptidoglycan biosynthetic process"/>
    <property type="evidence" value="ECO:0007669"/>
    <property type="project" value="UniProtKB-UniRule"/>
</dbReference>
<dbReference type="GO" id="GO:0008360">
    <property type="term" value="P:regulation of cell shape"/>
    <property type="evidence" value="ECO:0007669"/>
    <property type="project" value="UniProtKB-KW"/>
</dbReference>
<dbReference type="Gene3D" id="3.90.190.20">
    <property type="entry name" value="Mur ligase, C-terminal domain"/>
    <property type="match status" value="1"/>
</dbReference>
<dbReference type="Gene3D" id="3.40.1190.10">
    <property type="entry name" value="Mur-like, catalytic domain"/>
    <property type="match status" value="1"/>
</dbReference>
<dbReference type="Gene3D" id="3.40.50.720">
    <property type="entry name" value="NAD(P)-binding Rossmann-like Domain"/>
    <property type="match status" value="1"/>
</dbReference>
<dbReference type="HAMAP" id="MF_00639">
    <property type="entry name" value="MurD"/>
    <property type="match status" value="1"/>
</dbReference>
<dbReference type="InterPro" id="IPR036565">
    <property type="entry name" value="Mur-like_cat_sf"/>
</dbReference>
<dbReference type="InterPro" id="IPR004101">
    <property type="entry name" value="Mur_ligase_C"/>
</dbReference>
<dbReference type="InterPro" id="IPR036615">
    <property type="entry name" value="Mur_ligase_C_dom_sf"/>
</dbReference>
<dbReference type="InterPro" id="IPR013221">
    <property type="entry name" value="Mur_ligase_cen"/>
</dbReference>
<dbReference type="InterPro" id="IPR005762">
    <property type="entry name" value="MurD"/>
</dbReference>
<dbReference type="NCBIfam" id="TIGR01087">
    <property type="entry name" value="murD"/>
    <property type="match status" value="1"/>
</dbReference>
<dbReference type="PANTHER" id="PTHR43692">
    <property type="entry name" value="UDP-N-ACETYLMURAMOYLALANINE--D-GLUTAMATE LIGASE"/>
    <property type="match status" value="1"/>
</dbReference>
<dbReference type="PANTHER" id="PTHR43692:SF1">
    <property type="entry name" value="UDP-N-ACETYLMURAMOYLALANINE--D-GLUTAMATE LIGASE"/>
    <property type="match status" value="1"/>
</dbReference>
<dbReference type="Pfam" id="PF02875">
    <property type="entry name" value="Mur_ligase_C"/>
    <property type="match status" value="1"/>
</dbReference>
<dbReference type="Pfam" id="PF08245">
    <property type="entry name" value="Mur_ligase_M"/>
    <property type="match status" value="1"/>
</dbReference>
<dbReference type="Pfam" id="PF21799">
    <property type="entry name" value="MurD-like_N"/>
    <property type="match status" value="1"/>
</dbReference>
<dbReference type="SUPFAM" id="SSF51984">
    <property type="entry name" value="MurCD N-terminal domain"/>
    <property type="match status" value="1"/>
</dbReference>
<dbReference type="SUPFAM" id="SSF53623">
    <property type="entry name" value="MurD-like peptide ligases, catalytic domain"/>
    <property type="match status" value="1"/>
</dbReference>
<dbReference type="SUPFAM" id="SSF53244">
    <property type="entry name" value="MurD-like peptide ligases, peptide-binding domain"/>
    <property type="match status" value="1"/>
</dbReference>
<keyword id="KW-0067">ATP-binding</keyword>
<keyword id="KW-0131">Cell cycle</keyword>
<keyword id="KW-0132">Cell division</keyword>
<keyword id="KW-0133">Cell shape</keyword>
<keyword id="KW-0961">Cell wall biogenesis/degradation</keyword>
<keyword id="KW-0963">Cytoplasm</keyword>
<keyword id="KW-0436">Ligase</keyword>
<keyword id="KW-0547">Nucleotide-binding</keyword>
<keyword id="KW-0573">Peptidoglycan synthesis</keyword>
<accession>Q6HEQ2</accession>
<evidence type="ECO:0000255" key="1">
    <source>
        <dbReference type="HAMAP-Rule" id="MF_00639"/>
    </source>
</evidence>
<comment type="function">
    <text evidence="1">Cell wall formation. Catalyzes the addition of glutamate to the nucleotide precursor UDP-N-acetylmuramoyl-L-alanine (UMA).</text>
</comment>
<comment type="catalytic activity">
    <reaction evidence="1">
        <text>UDP-N-acetyl-alpha-D-muramoyl-L-alanine + D-glutamate + ATP = UDP-N-acetyl-alpha-D-muramoyl-L-alanyl-D-glutamate + ADP + phosphate + H(+)</text>
        <dbReference type="Rhea" id="RHEA:16429"/>
        <dbReference type="ChEBI" id="CHEBI:15378"/>
        <dbReference type="ChEBI" id="CHEBI:29986"/>
        <dbReference type="ChEBI" id="CHEBI:30616"/>
        <dbReference type="ChEBI" id="CHEBI:43474"/>
        <dbReference type="ChEBI" id="CHEBI:83898"/>
        <dbReference type="ChEBI" id="CHEBI:83900"/>
        <dbReference type="ChEBI" id="CHEBI:456216"/>
        <dbReference type="EC" id="6.3.2.9"/>
    </reaction>
</comment>
<comment type="pathway">
    <text evidence="1">Cell wall biogenesis; peptidoglycan biosynthesis.</text>
</comment>
<comment type="subcellular location">
    <subcellularLocation>
        <location evidence="1">Cytoplasm</location>
    </subcellularLocation>
</comment>
<comment type="similarity">
    <text evidence="1">Belongs to the MurCDEF family.</text>
</comment>
<proteinExistence type="inferred from homology"/>
<sequence>MKTVTEFQNKNILVLGIAKSGYAAATLLQKLGANVIVNDGKPLAENVLAAELQAKGMDVVCGGHPLELLERNISLVVKNPGIPYSNPILVAAKEKQIPIVTEVELAYRISEAPFVGITGSNGKTTTTMLTFEMLKEGQKHPVIAGNIGTVACEVAQDAKENEVVVTELSSFQLMGVELFQPKIAAFLNLFEAHLDYHGTKKEYGLAKANIFKNQTENDYSVINADDADVMALSAYSKGQKVLFSTTKEIEDGACIKDNALYFKAEKVVEVDDIVLPGQHNLENILAAMSIAKLLGVSNEAITAVLKRFTGVKHRLEYVTTINNRKFYNDSKATNMLATEKALSAFTQPTVLLAGGLDRGNEFDDLIPYFKNVKAIVTFGQTAPKLVRAAEKAGLETIESVDTLDEAVVKAYAHSTDGDVILLSPACASWDQFKTFEERGDIFIQAVHKLI</sequence>
<gene>
    <name evidence="1" type="primary">murD</name>
    <name type="ordered locus">BT9727_3654</name>
</gene>
<feature type="chain" id="PRO_0000108967" description="UDP-N-acetylmuramoylalanine--D-glutamate ligase">
    <location>
        <begin position="1"/>
        <end position="450"/>
    </location>
</feature>
<feature type="binding site" evidence="1">
    <location>
        <begin position="119"/>
        <end position="125"/>
    </location>
    <ligand>
        <name>ATP</name>
        <dbReference type="ChEBI" id="CHEBI:30616"/>
    </ligand>
</feature>
<protein>
    <recommendedName>
        <fullName evidence="1">UDP-N-acetylmuramoylalanine--D-glutamate ligase</fullName>
        <ecNumber evidence="1">6.3.2.9</ecNumber>
    </recommendedName>
    <alternativeName>
        <fullName evidence="1">D-glutamic acid-adding enzyme</fullName>
    </alternativeName>
    <alternativeName>
        <fullName evidence="1">UDP-N-acetylmuramoyl-L-alanyl-D-glutamate synthetase</fullName>
    </alternativeName>
</protein>